<name>FEUB_BACSU</name>
<evidence type="ECO:0000255" key="1"/>
<evidence type="ECO:0000269" key="2">
    <source>
    </source>
</evidence>
<evidence type="ECO:0000269" key="3">
    <source>
    </source>
</evidence>
<evidence type="ECO:0000269" key="4">
    <source>
    </source>
</evidence>
<evidence type="ECO:0000269" key="5">
    <source>
    </source>
</evidence>
<evidence type="ECO:0000305" key="6"/>
<evidence type="ECO:0000305" key="7">
    <source>
    </source>
</evidence>
<feature type="chain" id="PRO_0000060024" description="Iron-uptake system permease protein FeuB">
    <location>
        <begin position="1"/>
        <end position="334"/>
    </location>
</feature>
<feature type="transmembrane region" description="Helical" evidence="1">
    <location>
        <begin position="9"/>
        <end position="29"/>
    </location>
</feature>
<feature type="transmembrane region" description="Helical" evidence="1">
    <location>
        <begin position="63"/>
        <end position="83"/>
    </location>
</feature>
<feature type="transmembrane region" description="Helical" evidence="1">
    <location>
        <begin position="91"/>
        <end position="111"/>
    </location>
</feature>
<feature type="transmembrane region" description="Helical" evidence="1">
    <location>
        <begin position="119"/>
        <end position="139"/>
    </location>
</feature>
<feature type="transmembrane region" description="Helical" evidence="1">
    <location>
        <begin position="150"/>
        <end position="170"/>
    </location>
</feature>
<feature type="transmembrane region" description="Helical" evidence="1">
    <location>
        <begin position="191"/>
        <end position="211"/>
    </location>
</feature>
<feature type="transmembrane region" description="Helical" evidence="1">
    <location>
        <begin position="243"/>
        <end position="263"/>
    </location>
</feature>
<feature type="transmembrane region" description="Helical" evidence="1">
    <location>
        <begin position="281"/>
        <end position="301"/>
    </location>
</feature>
<feature type="transmembrane region" description="Helical" evidence="1">
    <location>
        <begin position="305"/>
        <end position="325"/>
    </location>
</feature>
<reference key="1">
    <citation type="journal article" date="1994" name="Biochim. Biophys. Acta">
        <title>Isolation of Tn917 insertional mutants of Bacillus subtilis that are resistant to the protonophore carbonyl cyanide m-chlorophenylhydrazone.</title>
        <authorList>
            <person name="Quirk P.G."/>
            <person name="Guffanti A.A."/>
            <person name="Clejan S."/>
            <person name="Cheng J."/>
            <person name="Krulwich T.A."/>
        </authorList>
    </citation>
    <scope>NUCLEOTIDE SEQUENCE [GENOMIC DNA]</scope>
    <source>
        <strain>BD99 / MS94</strain>
    </source>
</reference>
<reference key="2">
    <citation type="journal article" date="1997" name="Microbiology">
        <title>Sequence and analysis of a 31 kb segment of the Bacillus subtilis chromosome in the area of the rrnH and rrnG operons.</title>
        <authorList>
            <person name="Liu H."/>
            <person name="Haga K."/>
            <person name="Yasumoto K."/>
            <person name="Ohashi Y."/>
            <person name="Yoshikawa H."/>
            <person name="Takahashi H."/>
        </authorList>
    </citation>
    <scope>NUCLEOTIDE SEQUENCE [GENOMIC DNA]</scope>
    <source>
        <strain>168</strain>
    </source>
</reference>
<reference key="3">
    <citation type="journal article" date="1997" name="Nature">
        <title>The complete genome sequence of the Gram-positive bacterium Bacillus subtilis.</title>
        <authorList>
            <person name="Kunst F."/>
            <person name="Ogasawara N."/>
            <person name="Moszer I."/>
            <person name="Albertini A.M."/>
            <person name="Alloni G."/>
            <person name="Azevedo V."/>
            <person name="Bertero M.G."/>
            <person name="Bessieres P."/>
            <person name="Bolotin A."/>
            <person name="Borchert S."/>
            <person name="Borriss R."/>
            <person name="Boursier L."/>
            <person name="Brans A."/>
            <person name="Braun M."/>
            <person name="Brignell S.C."/>
            <person name="Bron S."/>
            <person name="Brouillet S."/>
            <person name="Bruschi C.V."/>
            <person name="Caldwell B."/>
            <person name="Capuano V."/>
            <person name="Carter N.M."/>
            <person name="Choi S.-K."/>
            <person name="Codani J.-J."/>
            <person name="Connerton I.F."/>
            <person name="Cummings N.J."/>
            <person name="Daniel R.A."/>
            <person name="Denizot F."/>
            <person name="Devine K.M."/>
            <person name="Duesterhoeft A."/>
            <person name="Ehrlich S.D."/>
            <person name="Emmerson P.T."/>
            <person name="Entian K.-D."/>
            <person name="Errington J."/>
            <person name="Fabret C."/>
            <person name="Ferrari E."/>
            <person name="Foulger D."/>
            <person name="Fritz C."/>
            <person name="Fujita M."/>
            <person name="Fujita Y."/>
            <person name="Fuma S."/>
            <person name="Galizzi A."/>
            <person name="Galleron N."/>
            <person name="Ghim S.-Y."/>
            <person name="Glaser P."/>
            <person name="Goffeau A."/>
            <person name="Golightly E.J."/>
            <person name="Grandi G."/>
            <person name="Guiseppi G."/>
            <person name="Guy B.J."/>
            <person name="Haga K."/>
            <person name="Haiech J."/>
            <person name="Harwood C.R."/>
            <person name="Henaut A."/>
            <person name="Hilbert H."/>
            <person name="Holsappel S."/>
            <person name="Hosono S."/>
            <person name="Hullo M.-F."/>
            <person name="Itaya M."/>
            <person name="Jones L.-M."/>
            <person name="Joris B."/>
            <person name="Karamata D."/>
            <person name="Kasahara Y."/>
            <person name="Klaerr-Blanchard M."/>
            <person name="Klein C."/>
            <person name="Kobayashi Y."/>
            <person name="Koetter P."/>
            <person name="Koningstein G."/>
            <person name="Krogh S."/>
            <person name="Kumano M."/>
            <person name="Kurita K."/>
            <person name="Lapidus A."/>
            <person name="Lardinois S."/>
            <person name="Lauber J."/>
            <person name="Lazarevic V."/>
            <person name="Lee S.-M."/>
            <person name="Levine A."/>
            <person name="Liu H."/>
            <person name="Masuda S."/>
            <person name="Mauel C."/>
            <person name="Medigue C."/>
            <person name="Medina N."/>
            <person name="Mellado R.P."/>
            <person name="Mizuno M."/>
            <person name="Moestl D."/>
            <person name="Nakai S."/>
            <person name="Noback M."/>
            <person name="Noone D."/>
            <person name="O'Reilly M."/>
            <person name="Ogawa K."/>
            <person name="Ogiwara A."/>
            <person name="Oudega B."/>
            <person name="Park S.-H."/>
            <person name="Parro V."/>
            <person name="Pohl T.M."/>
            <person name="Portetelle D."/>
            <person name="Porwollik S."/>
            <person name="Prescott A.M."/>
            <person name="Presecan E."/>
            <person name="Pujic P."/>
            <person name="Purnelle B."/>
            <person name="Rapoport G."/>
            <person name="Rey M."/>
            <person name="Reynolds S."/>
            <person name="Rieger M."/>
            <person name="Rivolta C."/>
            <person name="Rocha E."/>
            <person name="Roche B."/>
            <person name="Rose M."/>
            <person name="Sadaie Y."/>
            <person name="Sato T."/>
            <person name="Scanlan E."/>
            <person name="Schleich S."/>
            <person name="Schroeter R."/>
            <person name="Scoffone F."/>
            <person name="Sekiguchi J."/>
            <person name="Sekowska A."/>
            <person name="Seror S.J."/>
            <person name="Serror P."/>
            <person name="Shin B.-S."/>
            <person name="Soldo B."/>
            <person name="Sorokin A."/>
            <person name="Tacconi E."/>
            <person name="Takagi T."/>
            <person name="Takahashi H."/>
            <person name="Takemaru K."/>
            <person name="Takeuchi M."/>
            <person name="Tamakoshi A."/>
            <person name="Tanaka T."/>
            <person name="Terpstra P."/>
            <person name="Tognoni A."/>
            <person name="Tosato V."/>
            <person name="Uchiyama S."/>
            <person name="Vandenbol M."/>
            <person name="Vannier F."/>
            <person name="Vassarotti A."/>
            <person name="Viari A."/>
            <person name="Wambutt R."/>
            <person name="Wedler E."/>
            <person name="Wedler H."/>
            <person name="Weitzenegger T."/>
            <person name="Winters P."/>
            <person name="Wipat A."/>
            <person name="Yamamoto H."/>
            <person name="Yamane K."/>
            <person name="Yasumoto K."/>
            <person name="Yata K."/>
            <person name="Yoshida K."/>
            <person name="Yoshikawa H.-F."/>
            <person name="Zumstein E."/>
            <person name="Yoshikawa H."/>
            <person name="Danchin A."/>
        </authorList>
    </citation>
    <scope>NUCLEOTIDE SEQUENCE [LARGE SCALE GENOMIC DNA]</scope>
    <source>
        <strain>168</strain>
    </source>
</reference>
<reference key="4">
    <citation type="journal article" date="2006" name="J. Bacteriol.">
        <title>Role of the Fur regulon in iron transport in Bacillus subtilis.</title>
        <authorList>
            <person name="Ollinger J."/>
            <person name="Song K.-B."/>
            <person name="Antelmann H."/>
            <person name="Hecker M."/>
            <person name="Helmann J.D."/>
        </authorList>
    </citation>
    <scope>FUNCTION</scope>
    <scope>POSSIBLE SUBUNIT</scope>
    <source>
        <strain>168</strain>
    </source>
</reference>
<reference key="5">
    <citation type="journal article" date="2007" name="Mol. Microbiol.">
        <title>Substrate induction of siderophore transport in Bacillus subtilis mediated by a novel one-component regulator.</title>
        <authorList>
            <person name="Gaballa A."/>
            <person name="Helmann J.D."/>
        </authorList>
    </citation>
    <scope>INDUCTION</scope>
    <source>
        <strain>168 / CU1065</strain>
    </source>
</reference>
<reference key="6">
    <citation type="journal article" date="2010" name="Genes Dev.">
        <title>Functional microdomains in bacterial membranes.</title>
        <authorList>
            <person name="Lopez D."/>
            <person name="Kolter R."/>
        </authorList>
    </citation>
    <scope>SUBCELLULAR LOCATION</scope>
    <source>
        <strain>168 / Marburg / ATCC 6051 / DSM 10 / JCM 1465 / NBRC 13719 / NCIMB 3610 / NRRL NRS-744 / VKM B-501</strain>
    </source>
</reference>
<reference key="7">
    <citation type="journal article" date="2012" name="Mol. Microbiol.">
        <title>The biofilm formation defect of a Bacillus subtilis flotillin-defective mutant involves the protease FtsH.</title>
        <authorList>
            <person name="Yepes A."/>
            <person name="Schneider J."/>
            <person name="Mielich B."/>
            <person name="Koch G."/>
            <person name="Garcia-Betancur J.C."/>
            <person name="Ramamurthi K.S."/>
            <person name="Vlamakis H."/>
            <person name="Lopez D."/>
        </authorList>
    </citation>
    <scope>SUBCELLULAR LOCATION</scope>
    <source>
        <strain>168 / Marburg / ATCC 6051 / DSM 10 / JCM 1465 / NBRC 13719 / NCIMB 3610 / NRRL NRS-744 / VKM B-501</strain>
    </source>
</reference>
<keyword id="KW-1003">Cell membrane</keyword>
<keyword id="KW-0406">Ion transport</keyword>
<keyword id="KW-0408">Iron</keyword>
<keyword id="KW-0410">Iron transport</keyword>
<keyword id="KW-0472">Membrane</keyword>
<keyword id="KW-1185">Reference proteome</keyword>
<keyword id="KW-0812">Transmembrane</keyword>
<keyword id="KW-1133">Transmembrane helix</keyword>
<keyword id="KW-0813">Transport</keyword>
<organism>
    <name type="scientific">Bacillus subtilis (strain 168)</name>
    <dbReference type="NCBI Taxonomy" id="224308"/>
    <lineage>
        <taxon>Bacteria</taxon>
        <taxon>Bacillati</taxon>
        <taxon>Bacillota</taxon>
        <taxon>Bacilli</taxon>
        <taxon>Bacillales</taxon>
        <taxon>Bacillaceae</taxon>
        <taxon>Bacillus</taxon>
    </lineage>
</organism>
<proteinExistence type="evidence at protein level"/>
<accession>P40410</accession>
<protein>
    <recommendedName>
        <fullName>Iron-uptake system permease protein FeuB</fullName>
    </recommendedName>
</protein>
<dbReference type="EMBL" id="L19954">
    <property type="protein sequence ID" value="AAA64355.1"/>
    <property type="molecule type" value="Genomic_DNA"/>
</dbReference>
<dbReference type="EMBL" id="AB002150">
    <property type="protein sequence ID" value="BAA19495.1"/>
    <property type="molecule type" value="Genomic_DNA"/>
</dbReference>
<dbReference type="EMBL" id="AL009126">
    <property type="protein sequence ID" value="CAB11938.1"/>
    <property type="molecule type" value="Genomic_DNA"/>
</dbReference>
<dbReference type="PIR" id="I39843">
    <property type="entry name" value="I39843"/>
</dbReference>
<dbReference type="RefSeq" id="NP_388043.1">
    <property type="nucleotide sequence ID" value="NC_000964.3"/>
</dbReference>
<dbReference type="RefSeq" id="WP_003234979.1">
    <property type="nucleotide sequence ID" value="NZ_OZ025638.1"/>
</dbReference>
<dbReference type="SMR" id="P40410"/>
<dbReference type="FunCoup" id="P40410">
    <property type="interactions" value="58"/>
</dbReference>
<dbReference type="STRING" id="224308.BSU01620"/>
<dbReference type="TCDB" id="3.A.1.14.15">
    <property type="family name" value="the atp-binding cassette (abc) superfamily"/>
</dbReference>
<dbReference type="PaxDb" id="224308-BSU01620"/>
<dbReference type="EnsemblBacteria" id="CAB11938">
    <property type="protein sequence ID" value="CAB11938"/>
    <property type="gene ID" value="BSU_01620"/>
</dbReference>
<dbReference type="GeneID" id="938884"/>
<dbReference type="KEGG" id="bsu:BSU01620"/>
<dbReference type="PATRIC" id="fig|224308.179.peg.168"/>
<dbReference type="eggNOG" id="COG0609">
    <property type="taxonomic scope" value="Bacteria"/>
</dbReference>
<dbReference type="InParanoid" id="P40410"/>
<dbReference type="OrthoDB" id="9811721at2"/>
<dbReference type="PhylomeDB" id="P40410"/>
<dbReference type="BioCyc" id="BSUB:BSU01620-MONOMER"/>
<dbReference type="Proteomes" id="UP000001570">
    <property type="component" value="Chromosome"/>
</dbReference>
<dbReference type="GO" id="GO:0045121">
    <property type="term" value="C:membrane raft"/>
    <property type="evidence" value="ECO:0007669"/>
    <property type="project" value="UniProtKB-SubCell"/>
</dbReference>
<dbReference type="GO" id="GO:0005886">
    <property type="term" value="C:plasma membrane"/>
    <property type="evidence" value="ECO:0000318"/>
    <property type="project" value="GO_Central"/>
</dbReference>
<dbReference type="GO" id="GO:0022857">
    <property type="term" value="F:transmembrane transporter activity"/>
    <property type="evidence" value="ECO:0000318"/>
    <property type="project" value="GO_Central"/>
</dbReference>
<dbReference type="GO" id="GO:0006811">
    <property type="term" value="P:monoatomic ion transport"/>
    <property type="evidence" value="ECO:0000270"/>
    <property type="project" value="CACAO"/>
</dbReference>
<dbReference type="GO" id="GO:0033214">
    <property type="term" value="P:siderophore-dependent iron import into cell"/>
    <property type="evidence" value="ECO:0000318"/>
    <property type="project" value="GO_Central"/>
</dbReference>
<dbReference type="CDD" id="cd06550">
    <property type="entry name" value="TM_ABC_iron-siderophores_like"/>
    <property type="match status" value="1"/>
</dbReference>
<dbReference type="FunFam" id="1.10.3470.10:FF:000001">
    <property type="entry name" value="Vitamin B12 ABC transporter permease BtuC"/>
    <property type="match status" value="1"/>
</dbReference>
<dbReference type="Gene3D" id="1.10.3470.10">
    <property type="entry name" value="ABC transporter involved in vitamin B12 uptake, BtuC"/>
    <property type="match status" value="1"/>
</dbReference>
<dbReference type="InterPro" id="IPR037294">
    <property type="entry name" value="ABC_BtuC-like"/>
</dbReference>
<dbReference type="InterPro" id="IPR000522">
    <property type="entry name" value="ABC_transptr_permease_BtuC"/>
</dbReference>
<dbReference type="PANTHER" id="PTHR30472">
    <property type="entry name" value="FERRIC ENTEROBACTIN TRANSPORT SYSTEM PERMEASE PROTEIN"/>
    <property type="match status" value="1"/>
</dbReference>
<dbReference type="PANTHER" id="PTHR30472:SF30">
    <property type="entry name" value="IRON-UPTAKE SYSTEM PERMEASE PROTEIN FEUB"/>
    <property type="match status" value="1"/>
</dbReference>
<dbReference type="Pfam" id="PF01032">
    <property type="entry name" value="FecCD"/>
    <property type="match status" value="1"/>
</dbReference>
<dbReference type="SUPFAM" id="SSF81345">
    <property type="entry name" value="ABC transporter involved in vitamin B12 uptake, BtuC"/>
    <property type="match status" value="1"/>
</dbReference>
<gene>
    <name type="primary">feuB</name>
    <name type="ordered locus">BSU01620</name>
</gene>
<comment type="function">
    <text evidence="2">Involved in the uptake of iron. Probably responsible for the translocation of the substrate across the membrane.</text>
</comment>
<comment type="function">
    <text evidence="7">Part of the ABC transporter complex FeuABC/YusV involved in import of the catecholate siderophores bacillibactin and enterobactin.</text>
</comment>
<comment type="subunit">
    <text evidence="6">The complex is composed of one ATP-binding protein (YusV), two transmembrane proteins (FeuB and FeuC) and a solute-binding protein (FeuA).</text>
</comment>
<comment type="subcellular location">
    <subcellularLocation>
        <location evidence="4 5">Cell membrane</location>
        <topology>Multi-pass membrane protein</topology>
    </subcellularLocation>
    <subcellularLocation>
        <location evidence="4 5">Membrane raft</location>
        <topology evidence="1">Multi-pass membrane protein</topology>
    </subcellularLocation>
    <text evidence="4 5">Present in detergent-resistant membrane (DRM) fractions that may be equivalent to eukaryotic membrane rafts; these rafts include proteins involved in signaling, molecule trafficking and protein secretion.</text>
</comment>
<comment type="induction">
    <text evidence="3">Induced by Btr in iron-limited conditions.</text>
</comment>
<comment type="similarity">
    <text evidence="6">Belongs to the binding-protein-dependent transport system permease family. FecCD subfamily.</text>
</comment>
<sequence length="334" mass="35897">MYSKQWTRIILITSPFAIALSLLLSILYGAKHLSTDIVFTSLIHFDPGNTDHQIIWHSRIPRAAGALLIGAALAVSGALMQGITRNYLASPSIMGVSDGSAFIITLCMVLLPQSSSIEMMIYSFIGSALGAVLVFGLAAMMPNGFTPVQLAIIGTVTSMLLSSLSAAMSIYFQISQDLSFWYSARLHQMSPDFLKLAAPFFLIGIIMAISLSKKVTAVSLGDDISKSLGQKKKTIKIMAMLSVIILTGSAVALAGKIAFVGLVVPHITRFLVGSDYSRLIPCSCILGGIFLTLCDLASRFINYPFETPIEVVTSIIGVPFFLYLIKRKGGEQNG</sequence>